<keyword id="KW-0460">Magnesium</keyword>
<keyword id="KW-0479">Metal-binding</keyword>
<keyword id="KW-0784">Thiamine biosynthesis</keyword>
<keyword id="KW-0808">Transferase</keyword>
<reference key="1">
    <citation type="journal article" date="2014" name="Genome Announc.">
        <title>Complete Genome Sequence of the Extreme Thermophile Dictyoglomus thermophilum H-6-12.</title>
        <authorList>
            <person name="Coil D.A."/>
            <person name="Badger J.H."/>
            <person name="Forberger H.C."/>
            <person name="Riggs F."/>
            <person name="Madupu R."/>
            <person name="Fedorova N."/>
            <person name="Ward N."/>
            <person name="Robb F.T."/>
            <person name="Eisen J.A."/>
        </authorList>
    </citation>
    <scope>NUCLEOTIDE SEQUENCE [LARGE SCALE GENOMIC DNA]</scope>
    <source>
        <strain>ATCC 35947 / DSM 3960 / H-6-12</strain>
    </source>
</reference>
<proteinExistence type="inferred from homology"/>
<comment type="function">
    <text evidence="1">Condenses 4-methyl-5-(beta-hydroxyethyl)thiazole monophosphate (THZ-P) and 2-methyl-4-amino-5-hydroxymethyl pyrimidine pyrophosphate (HMP-PP) to form thiamine monophosphate (TMP).</text>
</comment>
<comment type="catalytic activity">
    <reaction evidence="1">
        <text>2-[(2R,5Z)-2-carboxy-4-methylthiazol-5(2H)-ylidene]ethyl phosphate + 4-amino-2-methyl-5-(diphosphooxymethyl)pyrimidine + 2 H(+) = thiamine phosphate + CO2 + diphosphate</text>
        <dbReference type="Rhea" id="RHEA:47844"/>
        <dbReference type="ChEBI" id="CHEBI:15378"/>
        <dbReference type="ChEBI" id="CHEBI:16526"/>
        <dbReference type="ChEBI" id="CHEBI:33019"/>
        <dbReference type="ChEBI" id="CHEBI:37575"/>
        <dbReference type="ChEBI" id="CHEBI:57841"/>
        <dbReference type="ChEBI" id="CHEBI:62899"/>
        <dbReference type="EC" id="2.5.1.3"/>
    </reaction>
</comment>
<comment type="catalytic activity">
    <reaction evidence="1">
        <text>2-(2-carboxy-4-methylthiazol-5-yl)ethyl phosphate + 4-amino-2-methyl-5-(diphosphooxymethyl)pyrimidine + 2 H(+) = thiamine phosphate + CO2 + diphosphate</text>
        <dbReference type="Rhea" id="RHEA:47848"/>
        <dbReference type="ChEBI" id="CHEBI:15378"/>
        <dbReference type="ChEBI" id="CHEBI:16526"/>
        <dbReference type="ChEBI" id="CHEBI:33019"/>
        <dbReference type="ChEBI" id="CHEBI:37575"/>
        <dbReference type="ChEBI" id="CHEBI:57841"/>
        <dbReference type="ChEBI" id="CHEBI:62890"/>
        <dbReference type="EC" id="2.5.1.3"/>
    </reaction>
</comment>
<comment type="catalytic activity">
    <reaction evidence="1">
        <text>4-methyl-5-(2-phosphooxyethyl)-thiazole + 4-amino-2-methyl-5-(diphosphooxymethyl)pyrimidine + H(+) = thiamine phosphate + diphosphate</text>
        <dbReference type="Rhea" id="RHEA:22328"/>
        <dbReference type="ChEBI" id="CHEBI:15378"/>
        <dbReference type="ChEBI" id="CHEBI:33019"/>
        <dbReference type="ChEBI" id="CHEBI:37575"/>
        <dbReference type="ChEBI" id="CHEBI:57841"/>
        <dbReference type="ChEBI" id="CHEBI:58296"/>
        <dbReference type="EC" id="2.5.1.3"/>
    </reaction>
</comment>
<comment type="cofactor">
    <cofactor evidence="1">
        <name>Mg(2+)</name>
        <dbReference type="ChEBI" id="CHEBI:18420"/>
    </cofactor>
    <text evidence="1">Binds 1 Mg(2+) ion per subunit.</text>
</comment>
<comment type="pathway">
    <text evidence="1">Cofactor biosynthesis; thiamine diphosphate biosynthesis; thiamine phosphate from 4-amino-2-methyl-5-diphosphomethylpyrimidine and 4-methyl-5-(2-phosphoethyl)-thiazole: step 1/1.</text>
</comment>
<comment type="similarity">
    <text evidence="1">Belongs to the thiamine-phosphate synthase family.</text>
</comment>
<protein>
    <recommendedName>
        <fullName evidence="1">Thiamine-phosphate synthase</fullName>
        <shortName evidence="1">TP synthase</shortName>
        <shortName evidence="1">TPS</shortName>
        <ecNumber evidence="1">2.5.1.3</ecNumber>
    </recommendedName>
    <alternativeName>
        <fullName evidence="1">Thiamine-phosphate pyrophosphorylase</fullName>
        <shortName evidence="1">TMP pyrophosphorylase</shortName>
        <shortName evidence="1">TMP-PPase</shortName>
    </alternativeName>
</protein>
<evidence type="ECO:0000255" key="1">
    <source>
        <dbReference type="HAMAP-Rule" id="MF_00097"/>
    </source>
</evidence>
<dbReference type="EC" id="2.5.1.3" evidence="1"/>
<dbReference type="EMBL" id="CP001146">
    <property type="protein sequence ID" value="ACI19897.1"/>
    <property type="molecule type" value="Genomic_DNA"/>
</dbReference>
<dbReference type="RefSeq" id="WP_012548529.1">
    <property type="nucleotide sequence ID" value="NC_011297.1"/>
</dbReference>
<dbReference type="SMR" id="B5YA97"/>
<dbReference type="STRING" id="309799.DICTH_1552"/>
<dbReference type="PaxDb" id="309799-DICTH_1552"/>
<dbReference type="KEGG" id="dth:DICTH_1552"/>
<dbReference type="eggNOG" id="COG0352">
    <property type="taxonomic scope" value="Bacteria"/>
</dbReference>
<dbReference type="HOGENOM" id="CLU_018272_3_2_0"/>
<dbReference type="OrthoDB" id="9812206at2"/>
<dbReference type="UniPathway" id="UPA00060">
    <property type="reaction ID" value="UER00141"/>
</dbReference>
<dbReference type="Proteomes" id="UP000001733">
    <property type="component" value="Chromosome"/>
</dbReference>
<dbReference type="GO" id="GO:0005737">
    <property type="term" value="C:cytoplasm"/>
    <property type="evidence" value="ECO:0007669"/>
    <property type="project" value="TreeGrafter"/>
</dbReference>
<dbReference type="GO" id="GO:0000287">
    <property type="term" value="F:magnesium ion binding"/>
    <property type="evidence" value="ECO:0007669"/>
    <property type="project" value="UniProtKB-UniRule"/>
</dbReference>
<dbReference type="GO" id="GO:0004789">
    <property type="term" value="F:thiamine-phosphate diphosphorylase activity"/>
    <property type="evidence" value="ECO:0007669"/>
    <property type="project" value="UniProtKB-UniRule"/>
</dbReference>
<dbReference type="GO" id="GO:0009228">
    <property type="term" value="P:thiamine biosynthetic process"/>
    <property type="evidence" value="ECO:0007669"/>
    <property type="project" value="UniProtKB-KW"/>
</dbReference>
<dbReference type="GO" id="GO:0009229">
    <property type="term" value="P:thiamine diphosphate biosynthetic process"/>
    <property type="evidence" value="ECO:0007669"/>
    <property type="project" value="UniProtKB-UniRule"/>
</dbReference>
<dbReference type="CDD" id="cd00564">
    <property type="entry name" value="TMP_TenI"/>
    <property type="match status" value="1"/>
</dbReference>
<dbReference type="FunFam" id="3.20.20.70:FF:000096">
    <property type="entry name" value="Thiamine-phosphate synthase"/>
    <property type="match status" value="1"/>
</dbReference>
<dbReference type="Gene3D" id="3.20.20.70">
    <property type="entry name" value="Aldolase class I"/>
    <property type="match status" value="1"/>
</dbReference>
<dbReference type="HAMAP" id="MF_00097">
    <property type="entry name" value="TMP_synthase"/>
    <property type="match status" value="1"/>
</dbReference>
<dbReference type="InterPro" id="IPR013785">
    <property type="entry name" value="Aldolase_TIM"/>
</dbReference>
<dbReference type="InterPro" id="IPR036206">
    <property type="entry name" value="ThiamineP_synth_sf"/>
</dbReference>
<dbReference type="InterPro" id="IPR022998">
    <property type="entry name" value="ThiamineP_synth_TenI"/>
</dbReference>
<dbReference type="InterPro" id="IPR034291">
    <property type="entry name" value="TMP_synthase"/>
</dbReference>
<dbReference type="NCBIfam" id="TIGR00693">
    <property type="entry name" value="thiE"/>
    <property type="match status" value="1"/>
</dbReference>
<dbReference type="PANTHER" id="PTHR20857">
    <property type="entry name" value="THIAMINE-PHOSPHATE PYROPHOSPHORYLASE"/>
    <property type="match status" value="1"/>
</dbReference>
<dbReference type="PANTHER" id="PTHR20857:SF15">
    <property type="entry name" value="THIAMINE-PHOSPHATE SYNTHASE"/>
    <property type="match status" value="1"/>
</dbReference>
<dbReference type="Pfam" id="PF02581">
    <property type="entry name" value="TMP-TENI"/>
    <property type="match status" value="1"/>
</dbReference>
<dbReference type="SUPFAM" id="SSF51391">
    <property type="entry name" value="Thiamin phosphate synthase"/>
    <property type="match status" value="1"/>
</dbReference>
<accession>B5YA97</accession>
<name>THIE_DICT6</name>
<feature type="chain" id="PRO_1000093666" description="Thiamine-phosphate synthase">
    <location>
        <begin position="1"/>
        <end position="223"/>
    </location>
</feature>
<feature type="binding site" evidence="1">
    <location>
        <begin position="45"/>
        <end position="49"/>
    </location>
    <ligand>
        <name>4-amino-2-methyl-5-(diphosphooxymethyl)pyrimidine</name>
        <dbReference type="ChEBI" id="CHEBI:57841"/>
    </ligand>
</feature>
<feature type="binding site" evidence="1">
    <location>
        <position position="77"/>
    </location>
    <ligand>
        <name>4-amino-2-methyl-5-(diphosphooxymethyl)pyrimidine</name>
        <dbReference type="ChEBI" id="CHEBI:57841"/>
    </ligand>
</feature>
<feature type="binding site" evidence="1">
    <location>
        <position position="78"/>
    </location>
    <ligand>
        <name>Mg(2+)</name>
        <dbReference type="ChEBI" id="CHEBI:18420"/>
    </ligand>
</feature>
<feature type="binding site" evidence="1">
    <location>
        <position position="97"/>
    </location>
    <ligand>
        <name>Mg(2+)</name>
        <dbReference type="ChEBI" id="CHEBI:18420"/>
    </ligand>
</feature>
<feature type="binding site" evidence="1">
    <location>
        <position position="116"/>
    </location>
    <ligand>
        <name>4-amino-2-methyl-5-(diphosphooxymethyl)pyrimidine</name>
        <dbReference type="ChEBI" id="CHEBI:57841"/>
    </ligand>
</feature>
<feature type="binding site" evidence="1">
    <location>
        <begin position="142"/>
        <end position="144"/>
    </location>
    <ligand>
        <name>2-[(2R,5Z)-2-carboxy-4-methylthiazol-5(2H)-ylidene]ethyl phosphate</name>
        <dbReference type="ChEBI" id="CHEBI:62899"/>
    </ligand>
</feature>
<feature type="binding site" evidence="1">
    <location>
        <position position="145"/>
    </location>
    <ligand>
        <name>4-amino-2-methyl-5-(diphosphooxymethyl)pyrimidine</name>
        <dbReference type="ChEBI" id="CHEBI:57841"/>
    </ligand>
</feature>
<feature type="binding site" evidence="1">
    <location>
        <position position="173"/>
    </location>
    <ligand>
        <name>2-[(2R,5Z)-2-carboxy-4-methylthiazol-5(2H)-ylidene]ethyl phosphate</name>
        <dbReference type="ChEBI" id="CHEBI:62899"/>
    </ligand>
</feature>
<feature type="binding site" evidence="1">
    <location>
        <begin position="193"/>
        <end position="194"/>
    </location>
    <ligand>
        <name>2-[(2R,5Z)-2-carboxy-4-methylthiazol-5(2H)-ylidene]ethyl phosphate</name>
        <dbReference type="ChEBI" id="CHEBI:62899"/>
    </ligand>
</feature>
<gene>
    <name evidence="1" type="primary">thiE</name>
    <name type="ordered locus">DICTH_1552</name>
</gene>
<sequence>MNKGEKLSLFKDYNLYCLTCEDYSLGRRNIDVVREILNAGVRIIQYREKKKTMREKYQEAKKIRELTAQYNALLIINDHLDLAKIVEADGVHIGQEDYPIEVAKEYLGDEFIIGLTTHTKTQVIEAFQKGADYIGLGPIFPSYTKEKPHPPIGLEIIEWAVNHVHIPIVAIGGIKESNIYEVLKHGAKCIAMVTEIVSSQDIYEKTKNIIRILEGYKNGKNLA</sequence>
<organism>
    <name type="scientific">Dictyoglomus thermophilum (strain ATCC 35947 / DSM 3960 / H-6-12)</name>
    <dbReference type="NCBI Taxonomy" id="309799"/>
    <lineage>
        <taxon>Bacteria</taxon>
        <taxon>Pseudomonadati</taxon>
        <taxon>Dictyoglomota</taxon>
        <taxon>Dictyoglomia</taxon>
        <taxon>Dictyoglomales</taxon>
        <taxon>Dictyoglomaceae</taxon>
        <taxon>Dictyoglomus</taxon>
    </lineage>
</organism>